<dbReference type="EC" id="1.1.1.267" evidence="1"/>
<dbReference type="EMBL" id="CP001101">
    <property type="protein sequence ID" value="ACE03081.1"/>
    <property type="molecule type" value="Genomic_DNA"/>
</dbReference>
<dbReference type="SMR" id="B3EK13"/>
<dbReference type="STRING" id="331678.Cphamn1_0098"/>
<dbReference type="KEGG" id="cpb:Cphamn1_0098"/>
<dbReference type="eggNOG" id="COG0743">
    <property type="taxonomic scope" value="Bacteria"/>
</dbReference>
<dbReference type="HOGENOM" id="CLU_035714_4_0_10"/>
<dbReference type="OrthoDB" id="9806546at2"/>
<dbReference type="UniPathway" id="UPA00056">
    <property type="reaction ID" value="UER00092"/>
</dbReference>
<dbReference type="GO" id="GO:0030604">
    <property type="term" value="F:1-deoxy-D-xylulose-5-phosphate reductoisomerase activity"/>
    <property type="evidence" value="ECO:0007669"/>
    <property type="project" value="UniProtKB-UniRule"/>
</dbReference>
<dbReference type="GO" id="GO:0030145">
    <property type="term" value="F:manganese ion binding"/>
    <property type="evidence" value="ECO:0007669"/>
    <property type="project" value="TreeGrafter"/>
</dbReference>
<dbReference type="GO" id="GO:0070402">
    <property type="term" value="F:NADPH binding"/>
    <property type="evidence" value="ECO:0007669"/>
    <property type="project" value="InterPro"/>
</dbReference>
<dbReference type="GO" id="GO:0051484">
    <property type="term" value="P:isopentenyl diphosphate biosynthetic process, methylerythritol 4-phosphate pathway involved in terpenoid biosynthetic process"/>
    <property type="evidence" value="ECO:0007669"/>
    <property type="project" value="TreeGrafter"/>
</dbReference>
<dbReference type="FunFam" id="1.10.1740.10:FF:000004">
    <property type="entry name" value="1-deoxy-D-xylulose 5-phosphate reductoisomerase"/>
    <property type="match status" value="1"/>
</dbReference>
<dbReference type="FunFam" id="3.40.50.720:FF:000045">
    <property type="entry name" value="1-deoxy-D-xylulose 5-phosphate reductoisomerase"/>
    <property type="match status" value="1"/>
</dbReference>
<dbReference type="Gene3D" id="1.10.1740.10">
    <property type="match status" value="1"/>
</dbReference>
<dbReference type="Gene3D" id="3.40.50.720">
    <property type="entry name" value="NAD(P)-binding Rossmann-like Domain"/>
    <property type="match status" value="1"/>
</dbReference>
<dbReference type="HAMAP" id="MF_00183">
    <property type="entry name" value="DXP_reductoisom"/>
    <property type="match status" value="1"/>
</dbReference>
<dbReference type="InterPro" id="IPR003821">
    <property type="entry name" value="DXP_reductoisomerase"/>
</dbReference>
<dbReference type="InterPro" id="IPR013644">
    <property type="entry name" value="DXP_reductoisomerase_C"/>
</dbReference>
<dbReference type="InterPro" id="IPR013512">
    <property type="entry name" value="DXP_reductoisomerase_N"/>
</dbReference>
<dbReference type="InterPro" id="IPR026877">
    <property type="entry name" value="DXPR_C"/>
</dbReference>
<dbReference type="InterPro" id="IPR036169">
    <property type="entry name" value="DXPR_C_sf"/>
</dbReference>
<dbReference type="InterPro" id="IPR036291">
    <property type="entry name" value="NAD(P)-bd_dom_sf"/>
</dbReference>
<dbReference type="NCBIfam" id="TIGR00243">
    <property type="entry name" value="Dxr"/>
    <property type="match status" value="1"/>
</dbReference>
<dbReference type="NCBIfam" id="NF009114">
    <property type="entry name" value="PRK12464.1"/>
    <property type="match status" value="1"/>
</dbReference>
<dbReference type="PANTHER" id="PTHR30525">
    <property type="entry name" value="1-DEOXY-D-XYLULOSE 5-PHOSPHATE REDUCTOISOMERASE"/>
    <property type="match status" value="1"/>
</dbReference>
<dbReference type="PANTHER" id="PTHR30525:SF0">
    <property type="entry name" value="1-DEOXY-D-XYLULOSE 5-PHOSPHATE REDUCTOISOMERASE, CHLOROPLASTIC"/>
    <property type="match status" value="1"/>
</dbReference>
<dbReference type="Pfam" id="PF08436">
    <property type="entry name" value="DXP_redisom_C"/>
    <property type="match status" value="1"/>
</dbReference>
<dbReference type="Pfam" id="PF02670">
    <property type="entry name" value="DXP_reductoisom"/>
    <property type="match status" value="1"/>
</dbReference>
<dbReference type="Pfam" id="PF13288">
    <property type="entry name" value="DXPR_C"/>
    <property type="match status" value="1"/>
</dbReference>
<dbReference type="PIRSF" id="PIRSF006205">
    <property type="entry name" value="Dxp_reductismrs"/>
    <property type="match status" value="1"/>
</dbReference>
<dbReference type="SUPFAM" id="SSF69055">
    <property type="entry name" value="1-deoxy-D-xylulose-5-phosphate reductoisomerase, C-terminal domain"/>
    <property type="match status" value="1"/>
</dbReference>
<dbReference type="SUPFAM" id="SSF55347">
    <property type="entry name" value="Glyceraldehyde-3-phosphate dehydrogenase-like, C-terminal domain"/>
    <property type="match status" value="1"/>
</dbReference>
<dbReference type="SUPFAM" id="SSF51735">
    <property type="entry name" value="NAD(P)-binding Rossmann-fold domains"/>
    <property type="match status" value="1"/>
</dbReference>
<accession>B3EK13</accession>
<gene>
    <name evidence="1" type="primary">dxr</name>
    <name type="ordered locus">Cphamn1_0098</name>
</gene>
<name>DXR_CHLPB</name>
<evidence type="ECO:0000255" key="1">
    <source>
        <dbReference type="HAMAP-Rule" id="MF_00183"/>
    </source>
</evidence>
<feature type="chain" id="PRO_1000098483" description="1-deoxy-D-xylulose 5-phosphate reductoisomerase">
    <location>
        <begin position="1"/>
        <end position="382"/>
    </location>
</feature>
<feature type="binding site" evidence="1">
    <location>
        <position position="10"/>
    </location>
    <ligand>
        <name>NADPH</name>
        <dbReference type="ChEBI" id="CHEBI:57783"/>
    </ligand>
</feature>
<feature type="binding site" evidence="1">
    <location>
        <position position="11"/>
    </location>
    <ligand>
        <name>NADPH</name>
        <dbReference type="ChEBI" id="CHEBI:57783"/>
    </ligand>
</feature>
<feature type="binding site" evidence="1">
    <location>
        <position position="12"/>
    </location>
    <ligand>
        <name>NADPH</name>
        <dbReference type="ChEBI" id="CHEBI:57783"/>
    </ligand>
</feature>
<feature type="binding site" evidence="1">
    <location>
        <position position="13"/>
    </location>
    <ligand>
        <name>NADPH</name>
        <dbReference type="ChEBI" id="CHEBI:57783"/>
    </ligand>
</feature>
<feature type="binding site" evidence="1">
    <location>
        <position position="36"/>
    </location>
    <ligand>
        <name>NADPH</name>
        <dbReference type="ChEBI" id="CHEBI:57783"/>
    </ligand>
</feature>
<feature type="binding site" evidence="1">
    <location>
        <position position="122"/>
    </location>
    <ligand>
        <name>NADPH</name>
        <dbReference type="ChEBI" id="CHEBI:57783"/>
    </ligand>
</feature>
<feature type="binding site" evidence="1">
    <location>
        <position position="123"/>
    </location>
    <ligand>
        <name>1-deoxy-D-xylulose 5-phosphate</name>
        <dbReference type="ChEBI" id="CHEBI:57792"/>
    </ligand>
</feature>
<feature type="binding site" evidence="1">
    <location>
        <position position="124"/>
    </location>
    <ligand>
        <name>NADPH</name>
        <dbReference type="ChEBI" id="CHEBI:57783"/>
    </ligand>
</feature>
<feature type="binding site" evidence="1">
    <location>
        <position position="148"/>
    </location>
    <ligand>
        <name>Mn(2+)</name>
        <dbReference type="ChEBI" id="CHEBI:29035"/>
    </ligand>
</feature>
<feature type="binding site" evidence="1">
    <location>
        <position position="149"/>
    </location>
    <ligand>
        <name>1-deoxy-D-xylulose 5-phosphate</name>
        <dbReference type="ChEBI" id="CHEBI:57792"/>
    </ligand>
</feature>
<feature type="binding site" evidence="1">
    <location>
        <position position="150"/>
    </location>
    <ligand>
        <name>1-deoxy-D-xylulose 5-phosphate</name>
        <dbReference type="ChEBI" id="CHEBI:57792"/>
    </ligand>
</feature>
<feature type="binding site" evidence="1">
    <location>
        <position position="150"/>
    </location>
    <ligand>
        <name>Mn(2+)</name>
        <dbReference type="ChEBI" id="CHEBI:29035"/>
    </ligand>
</feature>
<feature type="binding site" evidence="1">
    <location>
        <position position="174"/>
    </location>
    <ligand>
        <name>1-deoxy-D-xylulose 5-phosphate</name>
        <dbReference type="ChEBI" id="CHEBI:57792"/>
    </ligand>
</feature>
<feature type="binding site" evidence="1">
    <location>
        <position position="197"/>
    </location>
    <ligand>
        <name>1-deoxy-D-xylulose 5-phosphate</name>
        <dbReference type="ChEBI" id="CHEBI:57792"/>
    </ligand>
</feature>
<feature type="binding site" evidence="1">
    <location>
        <position position="203"/>
    </location>
    <ligand>
        <name>NADPH</name>
        <dbReference type="ChEBI" id="CHEBI:57783"/>
    </ligand>
</feature>
<feature type="binding site" evidence="1">
    <location>
        <position position="210"/>
    </location>
    <ligand>
        <name>1-deoxy-D-xylulose 5-phosphate</name>
        <dbReference type="ChEBI" id="CHEBI:57792"/>
    </ligand>
</feature>
<feature type="binding site" evidence="1">
    <location>
        <position position="215"/>
    </location>
    <ligand>
        <name>1-deoxy-D-xylulose 5-phosphate</name>
        <dbReference type="ChEBI" id="CHEBI:57792"/>
    </ligand>
</feature>
<feature type="binding site" evidence="1">
    <location>
        <position position="216"/>
    </location>
    <ligand>
        <name>1-deoxy-D-xylulose 5-phosphate</name>
        <dbReference type="ChEBI" id="CHEBI:57792"/>
    </ligand>
</feature>
<feature type="binding site" evidence="1">
    <location>
        <position position="219"/>
    </location>
    <ligand>
        <name>1-deoxy-D-xylulose 5-phosphate</name>
        <dbReference type="ChEBI" id="CHEBI:57792"/>
    </ligand>
</feature>
<feature type="binding site" evidence="1">
    <location>
        <position position="219"/>
    </location>
    <ligand>
        <name>Mn(2+)</name>
        <dbReference type="ChEBI" id="CHEBI:29035"/>
    </ligand>
</feature>
<comment type="function">
    <text evidence="1">Catalyzes the NADPH-dependent rearrangement and reduction of 1-deoxy-D-xylulose-5-phosphate (DXP) to 2-C-methyl-D-erythritol 4-phosphate (MEP).</text>
</comment>
<comment type="catalytic activity">
    <reaction evidence="1">
        <text>2-C-methyl-D-erythritol 4-phosphate + NADP(+) = 1-deoxy-D-xylulose 5-phosphate + NADPH + H(+)</text>
        <dbReference type="Rhea" id="RHEA:13717"/>
        <dbReference type="ChEBI" id="CHEBI:15378"/>
        <dbReference type="ChEBI" id="CHEBI:57783"/>
        <dbReference type="ChEBI" id="CHEBI:57792"/>
        <dbReference type="ChEBI" id="CHEBI:58262"/>
        <dbReference type="ChEBI" id="CHEBI:58349"/>
        <dbReference type="EC" id="1.1.1.267"/>
    </reaction>
    <physiologicalReaction direction="right-to-left" evidence="1">
        <dbReference type="Rhea" id="RHEA:13719"/>
    </physiologicalReaction>
</comment>
<comment type="cofactor">
    <cofactor evidence="1">
        <name>Mg(2+)</name>
        <dbReference type="ChEBI" id="CHEBI:18420"/>
    </cofactor>
    <cofactor evidence="1">
        <name>Mn(2+)</name>
        <dbReference type="ChEBI" id="CHEBI:29035"/>
    </cofactor>
</comment>
<comment type="pathway">
    <text evidence="1">Isoprenoid biosynthesis; isopentenyl diphosphate biosynthesis via DXP pathway; isopentenyl diphosphate from 1-deoxy-D-xylulose 5-phosphate: step 1/6.</text>
</comment>
<comment type="similarity">
    <text evidence="1">Belongs to the DXR family.</text>
</comment>
<organism>
    <name type="scientific">Chlorobium phaeobacteroides (strain BS1)</name>
    <dbReference type="NCBI Taxonomy" id="331678"/>
    <lineage>
        <taxon>Bacteria</taxon>
        <taxon>Pseudomonadati</taxon>
        <taxon>Chlorobiota</taxon>
        <taxon>Chlorobiia</taxon>
        <taxon>Chlorobiales</taxon>
        <taxon>Chlorobiaceae</taxon>
        <taxon>Chlorobium/Pelodictyon group</taxon>
        <taxon>Chlorobium</taxon>
    </lineage>
</organism>
<protein>
    <recommendedName>
        <fullName evidence="1">1-deoxy-D-xylulose 5-phosphate reductoisomerase</fullName>
        <shortName evidence="1">DXP reductoisomerase</shortName>
        <ecNumber evidence="1">1.1.1.267</ecNumber>
    </recommendedName>
    <alternativeName>
        <fullName evidence="1">1-deoxyxylulose-5-phosphate reductoisomerase</fullName>
    </alternativeName>
    <alternativeName>
        <fullName evidence="1">2-C-methyl-D-erythritol 4-phosphate synthase</fullName>
    </alternativeName>
</protein>
<keyword id="KW-0414">Isoprene biosynthesis</keyword>
<keyword id="KW-0464">Manganese</keyword>
<keyword id="KW-0479">Metal-binding</keyword>
<keyword id="KW-0521">NADP</keyword>
<keyword id="KW-0560">Oxidoreductase</keyword>
<proteinExistence type="inferred from homology"/>
<reference key="1">
    <citation type="submission" date="2008-06" db="EMBL/GenBank/DDBJ databases">
        <title>Complete sequence of Chlorobium phaeobacteroides BS1.</title>
        <authorList>
            <consortium name="US DOE Joint Genome Institute"/>
            <person name="Lucas S."/>
            <person name="Copeland A."/>
            <person name="Lapidus A."/>
            <person name="Glavina del Rio T."/>
            <person name="Dalin E."/>
            <person name="Tice H."/>
            <person name="Bruce D."/>
            <person name="Goodwin L."/>
            <person name="Pitluck S."/>
            <person name="Schmutz J."/>
            <person name="Larimer F."/>
            <person name="Land M."/>
            <person name="Hauser L."/>
            <person name="Kyrpides N."/>
            <person name="Ovchinnikova G."/>
            <person name="Li T."/>
            <person name="Liu Z."/>
            <person name="Zhao F."/>
            <person name="Overmann J."/>
            <person name="Bryant D.A."/>
            <person name="Richardson P."/>
        </authorList>
    </citation>
    <scope>NUCLEOTIDE SEQUENCE [LARGE SCALE GENOMIC DNA]</scope>
    <source>
        <strain>BS1</strain>
    </source>
</reference>
<sequence>MKSLSILGSTGSIGLSTLDVVRQHPEKFNVTGLAEGHDINLLAEQIKEFRPDIVSVRDKASAGLLREQLGSEKPEILWGIEGAAAVGAAEGSEMVVSAIVGAAGLVPTVSAIKAGKDIALANKETLVVAGQLVSDLVKEHKVTLLPVDSEHSAIFQSLSGHRKEDIERIILTASGGPFRHTSAEDLRHVGPEKALKHPQWTMGAKITIDSATLMNKGLEVIEAHWLFDMPADKIGVVVHPQSIIHSMVEYIDGCVMAQLGAPDMRAPIAYALAWPERCESGIKKLDLTQIGTLTFEQPDMERFPALRLAFDALKAGQTFPAVLNAANEIAVAAFLDKKIGFTDIPAIADRTMQAHDPYTPSGLDEYLAADRWARDTAKTMTN</sequence>